<accession>A2RK98</accession>
<feature type="chain" id="PRO_1000049518" description="Glycerol-3-phosphate dehydrogenase [NAD(P)+]">
    <location>
        <begin position="1"/>
        <end position="342"/>
    </location>
</feature>
<feature type="active site" description="Proton acceptor" evidence="1">
    <location>
        <position position="194"/>
    </location>
</feature>
<feature type="binding site" evidence="1">
    <location>
        <position position="13"/>
    </location>
    <ligand>
        <name>NADPH</name>
        <dbReference type="ChEBI" id="CHEBI:57783"/>
    </ligand>
</feature>
<feature type="binding site" evidence="1">
    <location>
        <position position="14"/>
    </location>
    <ligand>
        <name>NADPH</name>
        <dbReference type="ChEBI" id="CHEBI:57783"/>
    </ligand>
</feature>
<feature type="binding site" evidence="1">
    <location>
        <position position="108"/>
    </location>
    <ligand>
        <name>NADPH</name>
        <dbReference type="ChEBI" id="CHEBI:57783"/>
    </ligand>
</feature>
<feature type="binding site" evidence="1">
    <location>
        <position position="108"/>
    </location>
    <ligand>
        <name>sn-glycerol 3-phosphate</name>
        <dbReference type="ChEBI" id="CHEBI:57597"/>
    </ligand>
</feature>
<feature type="binding site" evidence="1">
    <location>
        <position position="139"/>
    </location>
    <ligand>
        <name>sn-glycerol 3-phosphate</name>
        <dbReference type="ChEBI" id="CHEBI:57597"/>
    </ligand>
</feature>
<feature type="binding site" evidence="1">
    <location>
        <position position="141"/>
    </location>
    <ligand>
        <name>sn-glycerol 3-phosphate</name>
        <dbReference type="ChEBI" id="CHEBI:57597"/>
    </ligand>
</feature>
<feature type="binding site" evidence="1">
    <location>
        <position position="143"/>
    </location>
    <ligand>
        <name>NADPH</name>
        <dbReference type="ChEBI" id="CHEBI:57783"/>
    </ligand>
</feature>
<feature type="binding site" evidence="1">
    <location>
        <position position="194"/>
    </location>
    <ligand>
        <name>sn-glycerol 3-phosphate</name>
        <dbReference type="ChEBI" id="CHEBI:57597"/>
    </ligand>
</feature>
<feature type="binding site" evidence="1">
    <location>
        <position position="247"/>
    </location>
    <ligand>
        <name>sn-glycerol 3-phosphate</name>
        <dbReference type="ChEBI" id="CHEBI:57597"/>
    </ligand>
</feature>
<feature type="binding site" evidence="1">
    <location>
        <position position="257"/>
    </location>
    <ligand>
        <name>sn-glycerol 3-phosphate</name>
        <dbReference type="ChEBI" id="CHEBI:57597"/>
    </ligand>
</feature>
<feature type="binding site" evidence="1">
    <location>
        <position position="258"/>
    </location>
    <ligand>
        <name>NADPH</name>
        <dbReference type="ChEBI" id="CHEBI:57783"/>
    </ligand>
</feature>
<feature type="binding site" evidence="1">
    <location>
        <position position="258"/>
    </location>
    <ligand>
        <name>sn-glycerol 3-phosphate</name>
        <dbReference type="ChEBI" id="CHEBI:57597"/>
    </ligand>
</feature>
<feature type="binding site" evidence="1">
    <location>
        <position position="259"/>
    </location>
    <ligand>
        <name>sn-glycerol 3-phosphate</name>
        <dbReference type="ChEBI" id="CHEBI:57597"/>
    </ligand>
</feature>
<feature type="binding site" evidence="1">
    <location>
        <position position="282"/>
    </location>
    <ligand>
        <name>NADPH</name>
        <dbReference type="ChEBI" id="CHEBI:57783"/>
    </ligand>
</feature>
<feature type="binding site" evidence="1">
    <location>
        <position position="284"/>
    </location>
    <ligand>
        <name>NADPH</name>
        <dbReference type="ChEBI" id="CHEBI:57783"/>
    </ligand>
</feature>
<reference key="1">
    <citation type="journal article" date="2007" name="J. Bacteriol.">
        <title>The complete genome sequence of the lactic acid bacterial paradigm Lactococcus lactis subsp. cremoris MG1363.</title>
        <authorList>
            <person name="Wegmann U."/>
            <person name="O'Connell-Motherway M."/>
            <person name="Zomer A."/>
            <person name="Buist G."/>
            <person name="Shearman C."/>
            <person name="Canchaya C."/>
            <person name="Ventura M."/>
            <person name="Goesmann A."/>
            <person name="Gasson M.J."/>
            <person name="Kuipers O.P."/>
            <person name="van Sinderen D."/>
            <person name="Kok J."/>
        </authorList>
    </citation>
    <scope>NUCLEOTIDE SEQUENCE [LARGE SCALE GENOMIC DNA]</scope>
    <source>
        <strain>MG1363</strain>
    </source>
</reference>
<dbReference type="EC" id="1.1.1.94" evidence="1"/>
<dbReference type="EMBL" id="AM406671">
    <property type="protein sequence ID" value="CAL97708.1"/>
    <property type="molecule type" value="Genomic_DNA"/>
</dbReference>
<dbReference type="RefSeq" id="WP_011835022.1">
    <property type="nucleotide sequence ID" value="NC_009004.1"/>
</dbReference>
<dbReference type="SMR" id="A2RK98"/>
<dbReference type="STRING" id="416870.llmg_1114"/>
<dbReference type="GeneID" id="61109615"/>
<dbReference type="KEGG" id="llm:llmg_1114"/>
<dbReference type="eggNOG" id="COG0240">
    <property type="taxonomic scope" value="Bacteria"/>
</dbReference>
<dbReference type="HOGENOM" id="CLU_033449_0_2_9"/>
<dbReference type="OrthoDB" id="9812273at2"/>
<dbReference type="PhylomeDB" id="A2RK98"/>
<dbReference type="UniPathway" id="UPA00940"/>
<dbReference type="Proteomes" id="UP000000364">
    <property type="component" value="Chromosome"/>
</dbReference>
<dbReference type="GO" id="GO:0005829">
    <property type="term" value="C:cytosol"/>
    <property type="evidence" value="ECO:0007669"/>
    <property type="project" value="TreeGrafter"/>
</dbReference>
<dbReference type="GO" id="GO:0047952">
    <property type="term" value="F:glycerol-3-phosphate dehydrogenase [NAD(P)+] activity"/>
    <property type="evidence" value="ECO:0007669"/>
    <property type="project" value="UniProtKB-UniRule"/>
</dbReference>
<dbReference type="GO" id="GO:0051287">
    <property type="term" value="F:NAD binding"/>
    <property type="evidence" value="ECO:0007669"/>
    <property type="project" value="InterPro"/>
</dbReference>
<dbReference type="GO" id="GO:0005975">
    <property type="term" value="P:carbohydrate metabolic process"/>
    <property type="evidence" value="ECO:0007669"/>
    <property type="project" value="InterPro"/>
</dbReference>
<dbReference type="GO" id="GO:0046167">
    <property type="term" value="P:glycerol-3-phosphate biosynthetic process"/>
    <property type="evidence" value="ECO:0007669"/>
    <property type="project" value="UniProtKB-UniRule"/>
</dbReference>
<dbReference type="GO" id="GO:0046168">
    <property type="term" value="P:glycerol-3-phosphate catabolic process"/>
    <property type="evidence" value="ECO:0007669"/>
    <property type="project" value="InterPro"/>
</dbReference>
<dbReference type="GO" id="GO:0006650">
    <property type="term" value="P:glycerophospholipid metabolic process"/>
    <property type="evidence" value="ECO:0007669"/>
    <property type="project" value="UniProtKB-UniRule"/>
</dbReference>
<dbReference type="GO" id="GO:0008654">
    <property type="term" value="P:phospholipid biosynthetic process"/>
    <property type="evidence" value="ECO:0007669"/>
    <property type="project" value="UniProtKB-KW"/>
</dbReference>
<dbReference type="FunFam" id="1.10.1040.10:FF:000001">
    <property type="entry name" value="Glycerol-3-phosphate dehydrogenase [NAD(P)+]"/>
    <property type="match status" value="1"/>
</dbReference>
<dbReference type="FunFam" id="3.40.50.720:FF:000019">
    <property type="entry name" value="Glycerol-3-phosphate dehydrogenase [NAD(P)+]"/>
    <property type="match status" value="1"/>
</dbReference>
<dbReference type="Gene3D" id="1.10.1040.10">
    <property type="entry name" value="N-(1-d-carboxylethyl)-l-norvaline Dehydrogenase, domain 2"/>
    <property type="match status" value="1"/>
</dbReference>
<dbReference type="Gene3D" id="3.40.50.720">
    <property type="entry name" value="NAD(P)-binding Rossmann-like Domain"/>
    <property type="match status" value="1"/>
</dbReference>
<dbReference type="HAMAP" id="MF_00394">
    <property type="entry name" value="NAD_Glyc3P_dehydrog"/>
    <property type="match status" value="1"/>
</dbReference>
<dbReference type="InterPro" id="IPR008927">
    <property type="entry name" value="6-PGluconate_DH-like_C_sf"/>
</dbReference>
<dbReference type="InterPro" id="IPR013328">
    <property type="entry name" value="6PGD_dom2"/>
</dbReference>
<dbReference type="InterPro" id="IPR006168">
    <property type="entry name" value="G3P_DH_NAD-dep"/>
</dbReference>
<dbReference type="InterPro" id="IPR006109">
    <property type="entry name" value="G3P_DH_NAD-dep_C"/>
</dbReference>
<dbReference type="InterPro" id="IPR011128">
    <property type="entry name" value="G3P_DH_NAD-dep_N"/>
</dbReference>
<dbReference type="InterPro" id="IPR036291">
    <property type="entry name" value="NAD(P)-bd_dom_sf"/>
</dbReference>
<dbReference type="NCBIfam" id="NF000940">
    <property type="entry name" value="PRK00094.1-2"/>
    <property type="match status" value="1"/>
</dbReference>
<dbReference type="NCBIfam" id="NF000941">
    <property type="entry name" value="PRK00094.1-3"/>
    <property type="match status" value="1"/>
</dbReference>
<dbReference type="NCBIfam" id="NF000942">
    <property type="entry name" value="PRK00094.1-4"/>
    <property type="match status" value="1"/>
</dbReference>
<dbReference type="PANTHER" id="PTHR11728">
    <property type="entry name" value="GLYCEROL-3-PHOSPHATE DEHYDROGENASE"/>
    <property type="match status" value="1"/>
</dbReference>
<dbReference type="PANTHER" id="PTHR11728:SF1">
    <property type="entry name" value="GLYCEROL-3-PHOSPHATE DEHYDROGENASE [NAD(+)] 2, CHLOROPLASTIC"/>
    <property type="match status" value="1"/>
</dbReference>
<dbReference type="Pfam" id="PF07479">
    <property type="entry name" value="NAD_Gly3P_dh_C"/>
    <property type="match status" value="1"/>
</dbReference>
<dbReference type="Pfam" id="PF01210">
    <property type="entry name" value="NAD_Gly3P_dh_N"/>
    <property type="match status" value="1"/>
</dbReference>
<dbReference type="PIRSF" id="PIRSF000114">
    <property type="entry name" value="Glycerol-3-P_dh"/>
    <property type="match status" value="1"/>
</dbReference>
<dbReference type="PRINTS" id="PR00077">
    <property type="entry name" value="GPDHDRGNASE"/>
</dbReference>
<dbReference type="SUPFAM" id="SSF48179">
    <property type="entry name" value="6-phosphogluconate dehydrogenase C-terminal domain-like"/>
    <property type="match status" value="1"/>
</dbReference>
<dbReference type="SUPFAM" id="SSF51735">
    <property type="entry name" value="NAD(P)-binding Rossmann-fold domains"/>
    <property type="match status" value="1"/>
</dbReference>
<dbReference type="PROSITE" id="PS00957">
    <property type="entry name" value="NAD_G3PDH"/>
    <property type="match status" value="1"/>
</dbReference>
<evidence type="ECO:0000255" key="1">
    <source>
        <dbReference type="HAMAP-Rule" id="MF_00394"/>
    </source>
</evidence>
<organism>
    <name type="scientific">Lactococcus lactis subsp. cremoris (strain MG1363)</name>
    <dbReference type="NCBI Taxonomy" id="416870"/>
    <lineage>
        <taxon>Bacteria</taxon>
        <taxon>Bacillati</taxon>
        <taxon>Bacillota</taxon>
        <taxon>Bacilli</taxon>
        <taxon>Lactobacillales</taxon>
        <taxon>Streptococcaceae</taxon>
        <taxon>Lactococcus</taxon>
        <taxon>Lactococcus cremoris subsp. cremoris</taxon>
    </lineage>
</organism>
<sequence>MNPQKIAVLGPGSWGTALSQVLNDNGHEVRIWGNNLEQMAEINEKHTNTRYFKDVVLDEKIKAYSRLDLALENVDAILFVVPTKVTRLVAKQVAQVLKHKVHILHASKGLEQGTHDRISTILEEEIPAQLRGEIVVVSGPSHAEETIVRDITLISAASNDHDEAKYAQSIFSNDYFRLYTNTDVIGVETAGALKNIIAVGAGALHGLGFGDNAKAAIITRGLAEITRLGVAMGAEPLTYSGLSGVGDLIVTGTSIHSRNWRAGDALGRGEKIADIEKNMGMVIEGVSTTKAAYELAQRLEIDMPITETIYKVLYENLDAKSGILDIMRRETRAENEFININK</sequence>
<name>GPDA_LACLM</name>
<comment type="function">
    <text evidence="1">Catalyzes the reduction of the glycolytic intermediate dihydroxyacetone phosphate (DHAP) to sn-glycerol 3-phosphate (G3P), the key precursor for phospholipid synthesis.</text>
</comment>
<comment type="catalytic activity">
    <reaction evidence="1">
        <text>sn-glycerol 3-phosphate + NAD(+) = dihydroxyacetone phosphate + NADH + H(+)</text>
        <dbReference type="Rhea" id="RHEA:11092"/>
        <dbReference type="ChEBI" id="CHEBI:15378"/>
        <dbReference type="ChEBI" id="CHEBI:57540"/>
        <dbReference type="ChEBI" id="CHEBI:57597"/>
        <dbReference type="ChEBI" id="CHEBI:57642"/>
        <dbReference type="ChEBI" id="CHEBI:57945"/>
        <dbReference type="EC" id="1.1.1.94"/>
    </reaction>
    <physiologicalReaction direction="right-to-left" evidence="1">
        <dbReference type="Rhea" id="RHEA:11094"/>
    </physiologicalReaction>
</comment>
<comment type="catalytic activity">
    <reaction evidence="1">
        <text>sn-glycerol 3-phosphate + NADP(+) = dihydroxyacetone phosphate + NADPH + H(+)</text>
        <dbReference type="Rhea" id="RHEA:11096"/>
        <dbReference type="ChEBI" id="CHEBI:15378"/>
        <dbReference type="ChEBI" id="CHEBI:57597"/>
        <dbReference type="ChEBI" id="CHEBI:57642"/>
        <dbReference type="ChEBI" id="CHEBI:57783"/>
        <dbReference type="ChEBI" id="CHEBI:58349"/>
        <dbReference type="EC" id="1.1.1.94"/>
    </reaction>
    <physiologicalReaction direction="right-to-left" evidence="1">
        <dbReference type="Rhea" id="RHEA:11098"/>
    </physiologicalReaction>
</comment>
<comment type="pathway">
    <text evidence="1">Membrane lipid metabolism; glycerophospholipid metabolism.</text>
</comment>
<comment type="subcellular location">
    <subcellularLocation>
        <location evidence="1">Cytoplasm</location>
    </subcellularLocation>
</comment>
<comment type="similarity">
    <text evidence="1">Belongs to the NAD-dependent glycerol-3-phosphate dehydrogenase family.</text>
</comment>
<gene>
    <name evidence="1" type="primary">gpsA</name>
    <name type="ordered locus">llmg_1114</name>
</gene>
<proteinExistence type="inferred from homology"/>
<keyword id="KW-0963">Cytoplasm</keyword>
<keyword id="KW-0444">Lipid biosynthesis</keyword>
<keyword id="KW-0443">Lipid metabolism</keyword>
<keyword id="KW-0520">NAD</keyword>
<keyword id="KW-0521">NADP</keyword>
<keyword id="KW-0547">Nucleotide-binding</keyword>
<keyword id="KW-0560">Oxidoreductase</keyword>
<keyword id="KW-0594">Phospholipid biosynthesis</keyword>
<keyword id="KW-1208">Phospholipid metabolism</keyword>
<protein>
    <recommendedName>
        <fullName evidence="1">Glycerol-3-phosphate dehydrogenase [NAD(P)+]</fullName>
        <ecNumber evidence="1">1.1.1.94</ecNumber>
    </recommendedName>
    <alternativeName>
        <fullName evidence="1">NAD(P)(+)-dependent glycerol-3-phosphate dehydrogenase</fullName>
    </alternativeName>
    <alternativeName>
        <fullName evidence="1">NAD(P)H-dependent dihydroxyacetone-phosphate reductase</fullName>
    </alternativeName>
</protein>